<protein>
    <recommendedName>
        <fullName evidence="1">Sulfite reductase [NADPH] hemoprotein beta-component</fullName>
        <shortName evidence="1">SiR-HP</shortName>
        <shortName evidence="1">SiRHP</shortName>
        <ecNumber evidence="1">1.8.1.2</ecNumber>
    </recommendedName>
</protein>
<sequence>MSEKHPGPLVVEGKLTDAERMKLESNYLRGTIAEDLNDGLTGGFKGDNFLLIRFHGMYQQDDRDIRAERAEQKLEPRHAMLLRCRLPGGVITTKQWQAIDKFAGENTIYGSIRLTNRQTFQFHGILKKNVKPVHQMLHSVGLDALATANDMNRNVLCTSNPYESQLHAEAYEWAKKISEHLLPRTRAYAEIWLDQEKVATTDEEPILGQTYLPRKFKTTVVIPPQNDIDLHANDMNFVAIAENGKLVGFNLLVGGGLSIEHGNKKTYARTASEFGYLPLEHTLAVAEAVVTTQRDWGNRTDRKNAKTKYTLERVGVETFKAEVERRAGIKFEPIRPYEFTGRGDRIGWVKGIDDKWHLTLFIENGRILDYPGRPLKTGLLEIAKIHKGDFRITANQNLIIAGVPESEKAKIEKIAKESGLMNAVTPQRENSMACVSFPTCPLAMAEAERFLPSFIDNIDNLMAKHGVSDEHIVMRVTGCPNGCGRAMLAEVGLVGKAPGRYNLHLGGNRIGTRIPRMYKENITEPEILASLDELIGRWAKEREAGEGFGDFTVRAGIIRPVLDPARDLWD</sequence>
<organism>
    <name type="scientific">Escherichia coli O9:H4 (strain HS)</name>
    <dbReference type="NCBI Taxonomy" id="331112"/>
    <lineage>
        <taxon>Bacteria</taxon>
        <taxon>Pseudomonadati</taxon>
        <taxon>Pseudomonadota</taxon>
        <taxon>Gammaproteobacteria</taxon>
        <taxon>Enterobacterales</taxon>
        <taxon>Enterobacteriaceae</taxon>
        <taxon>Escherichia</taxon>
    </lineage>
</organism>
<feature type="chain" id="PRO_1000068759" description="Sulfite reductase [NADPH] hemoprotein beta-component">
    <location>
        <begin position="1"/>
        <end position="570"/>
    </location>
</feature>
<feature type="binding site" evidence="1">
    <location>
        <position position="434"/>
    </location>
    <ligand>
        <name>[4Fe-4S] cluster</name>
        <dbReference type="ChEBI" id="CHEBI:49883"/>
    </ligand>
</feature>
<feature type="binding site" evidence="1">
    <location>
        <position position="440"/>
    </location>
    <ligand>
        <name>[4Fe-4S] cluster</name>
        <dbReference type="ChEBI" id="CHEBI:49883"/>
    </ligand>
</feature>
<feature type="binding site" evidence="1">
    <location>
        <position position="479"/>
    </location>
    <ligand>
        <name>[4Fe-4S] cluster</name>
        <dbReference type="ChEBI" id="CHEBI:49883"/>
    </ligand>
</feature>
<feature type="binding site" evidence="1">
    <location>
        <position position="483"/>
    </location>
    <ligand>
        <name>[4Fe-4S] cluster</name>
        <dbReference type="ChEBI" id="CHEBI:49883"/>
    </ligand>
</feature>
<feature type="binding site" description="axial binding residue" evidence="1">
    <location>
        <position position="483"/>
    </location>
    <ligand>
        <name>siroheme</name>
        <dbReference type="ChEBI" id="CHEBI:60052"/>
    </ligand>
    <ligandPart>
        <name>Fe</name>
        <dbReference type="ChEBI" id="CHEBI:18248"/>
    </ligandPart>
</feature>
<name>CYSI_ECOHS</name>
<keyword id="KW-0004">4Fe-4S</keyword>
<keyword id="KW-0028">Amino-acid biosynthesis</keyword>
<keyword id="KW-0198">Cysteine biosynthesis</keyword>
<keyword id="KW-0349">Heme</keyword>
<keyword id="KW-0408">Iron</keyword>
<keyword id="KW-0411">Iron-sulfur</keyword>
<keyword id="KW-0479">Metal-binding</keyword>
<keyword id="KW-0521">NADP</keyword>
<keyword id="KW-0560">Oxidoreductase</keyword>
<comment type="function">
    <text evidence="1">Component of the sulfite reductase complex that catalyzes the 6-electron reduction of sulfite to sulfide. This is one of several activities required for the biosynthesis of L-cysteine from sulfate.</text>
</comment>
<comment type="catalytic activity">
    <reaction evidence="1">
        <text>hydrogen sulfide + 3 NADP(+) + 3 H2O = sulfite + 3 NADPH + 4 H(+)</text>
        <dbReference type="Rhea" id="RHEA:13801"/>
        <dbReference type="ChEBI" id="CHEBI:15377"/>
        <dbReference type="ChEBI" id="CHEBI:15378"/>
        <dbReference type="ChEBI" id="CHEBI:17359"/>
        <dbReference type="ChEBI" id="CHEBI:29919"/>
        <dbReference type="ChEBI" id="CHEBI:57783"/>
        <dbReference type="ChEBI" id="CHEBI:58349"/>
        <dbReference type="EC" id="1.8.1.2"/>
    </reaction>
</comment>
<comment type="cofactor">
    <cofactor evidence="1">
        <name>siroheme</name>
        <dbReference type="ChEBI" id="CHEBI:60052"/>
    </cofactor>
    <text evidence="1">Binds 1 siroheme per subunit.</text>
</comment>
<comment type="cofactor">
    <cofactor evidence="1">
        <name>[4Fe-4S] cluster</name>
        <dbReference type="ChEBI" id="CHEBI:49883"/>
    </cofactor>
    <text evidence="1">Binds 1 [4Fe-4S] cluster per subunit.</text>
</comment>
<comment type="pathway">
    <text evidence="1">Sulfur metabolism; hydrogen sulfide biosynthesis; hydrogen sulfide from sulfite (NADPH route): step 1/1.</text>
</comment>
<comment type="subunit">
    <text evidence="1">Alpha(8)-beta(8). The alpha component is a flavoprotein, the beta component is a hemoprotein.</text>
</comment>
<comment type="similarity">
    <text evidence="1">Belongs to the nitrite and sulfite reductase 4Fe-4S domain family.</text>
</comment>
<gene>
    <name evidence="1" type="primary">cysI</name>
    <name type="ordered locus">EcHS_A2903</name>
</gene>
<reference key="1">
    <citation type="journal article" date="2008" name="J. Bacteriol.">
        <title>The pangenome structure of Escherichia coli: comparative genomic analysis of E. coli commensal and pathogenic isolates.</title>
        <authorList>
            <person name="Rasko D.A."/>
            <person name="Rosovitz M.J."/>
            <person name="Myers G.S.A."/>
            <person name="Mongodin E.F."/>
            <person name="Fricke W.F."/>
            <person name="Gajer P."/>
            <person name="Crabtree J."/>
            <person name="Sebaihia M."/>
            <person name="Thomson N.R."/>
            <person name="Chaudhuri R."/>
            <person name="Henderson I.R."/>
            <person name="Sperandio V."/>
            <person name="Ravel J."/>
        </authorList>
    </citation>
    <scope>NUCLEOTIDE SEQUENCE [LARGE SCALE GENOMIC DNA]</scope>
    <source>
        <strain>HS</strain>
    </source>
</reference>
<proteinExistence type="inferred from homology"/>
<accession>A8A3P4</accession>
<evidence type="ECO:0000255" key="1">
    <source>
        <dbReference type="HAMAP-Rule" id="MF_01540"/>
    </source>
</evidence>
<dbReference type="EC" id="1.8.1.2" evidence="1"/>
<dbReference type="EMBL" id="CP000802">
    <property type="protein sequence ID" value="ABV07148.1"/>
    <property type="molecule type" value="Genomic_DNA"/>
</dbReference>
<dbReference type="RefSeq" id="WP_001290696.1">
    <property type="nucleotide sequence ID" value="NC_009800.1"/>
</dbReference>
<dbReference type="SMR" id="A8A3P4"/>
<dbReference type="KEGG" id="ecx:EcHS_A2903"/>
<dbReference type="HOGENOM" id="CLU_001975_3_2_6"/>
<dbReference type="UniPathway" id="UPA00140">
    <property type="reaction ID" value="UER00207"/>
</dbReference>
<dbReference type="GO" id="GO:0009337">
    <property type="term" value="C:sulfite reductase complex (NADPH)"/>
    <property type="evidence" value="ECO:0007669"/>
    <property type="project" value="InterPro"/>
</dbReference>
<dbReference type="GO" id="GO:0051539">
    <property type="term" value="F:4 iron, 4 sulfur cluster binding"/>
    <property type="evidence" value="ECO:0007669"/>
    <property type="project" value="UniProtKB-KW"/>
</dbReference>
<dbReference type="GO" id="GO:0020037">
    <property type="term" value="F:heme binding"/>
    <property type="evidence" value="ECO:0007669"/>
    <property type="project" value="InterPro"/>
</dbReference>
<dbReference type="GO" id="GO:0046872">
    <property type="term" value="F:metal ion binding"/>
    <property type="evidence" value="ECO:0007669"/>
    <property type="project" value="UniProtKB-KW"/>
</dbReference>
<dbReference type="GO" id="GO:0050661">
    <property type="term" value="F:NADP binding"/>
    <property type="evidence" value="ECO:0007669"/>
    <property type="project" value="InterPro"/>
</dbReference>
<dbReference type="GO" id="GO:0050311">
    <property type="term" value="F:sulfite reductase (ferredoxin) activity"/>
    <property type="evidence" value="ECO:0007669"/>
    <property type="project" value="TreeGrafter"/>
</dbReference>
<dbReference type="GO" id="GO:0004783">
    <property type="term" value="F:sulfite reductase (NADPH) activity"/>
    <property type="evidence" value="ECO:0007669"/>
    <property type="project" value="UniProtKB-UniRule"/>
</dbReference>
<dbReference type="GO" id="GO:0019344">
    <property type="term" value="P:cysteine biosynthetic process"/>
    <property type="evidence" value="ECO:0007669"/>
    <property type="project" value="UniProtKB-KW"/>
</dbReference>
<dbReference type="GO" id="GO:0070814">
    <property type="term" value="P:hydrogen sulfide biosynthetic process"/>
    <property type="evidence" value="ECO:0007669"/>
    <property type="project" value="UniProtKB-UniRule"/>
</dbReference>
<dbReference type="GO" id="GO:0000103">
    <property type="term" value="P:sulfate assimilation"/>
    <property type="evidence" value="ECO:0007669"/>
    <property type="project" value="UniProtKB-UniRule"/>
</dbReference>
<dbReference type="FunFam" id="3.30.413.10:FF:000003">
    <property type="entry name" value="Sulfite reductase [NADPH] hemoprotein beta-component"/>
    <property type="match status" value="1"/>
</dbReference>
<dbReference type="FunFam" id="3.30.413.10:FF:000004">
    <property type="entry name" value="Sulfite reductase [NADPH] hemoprotein beta-component"/>
    <property type="match status" value="1"/>
</dbReference>
<dbReference type="Gene3D" id="3.30.413.10">
    <property type="entry name" value="Sulfite Reductase Hemoprotein, domain 1"/>
    <property type="match status" value="2"/>
</dbReference>
<dbReference type="HAMAP" id="MF_01540">
    <property type="entry name" value="CysI"/>
    <property type="match status" value="1"/>
</dbReference>
<dbReference type="InterPro" id="IPR011786">
    <property type="entry name" value="CysI"/>
</dbReference>
<dbReference type="InterPro" id="IPR005117">
    <property type="entry name" value="NiRdtase/SiRdtase_haem-b_fer"/>
</dbReference>
<dbReference type="InterPro" id="IPR036136">
    <property type="entry name" value="Nit/Sulf_reduc_fer-like_dom_sf"/>
</dbReference>
<dbReference type="InterPro" id="IPR006067">
    <property type="entry name" value="NO2/SO3_Rdtase_4Fe4S_dom"/>
</dbReference>
<dbReference type="InterPro" id="IPR045169">
    <property type="entry name" value="NO2/SO3_Rdtase_4Fe4S_prot"/>
</dbReference>
<dbReference type="InterPro" id="IPR045854">
    <property type="entry name" value="NO2/SO3_Rdtase_4Fe4S_sf"/>
</dbReference>
<dbReference type="InterPro" id="IPR006066">
    <property type="entry name" value="NO2/SO3_Rdtase_FeS/sirohaem_BS"/>
</dbReference>
<dbReference type="NCBIfam" id="TIGR02041">
    <property type="entry name" value="CysI"/>
    <property type="match status" value="1"/>
</dbReference>
<dbReference type="NCBIfam" id="NF010029">
    <property type="entry name" value="PRK13504.1"/>
    <property type="match status" value="1"/>
</dbReference>
<dbReference type="PANTHER" id="PTHR11493:SF47">
    <property type="entry name" value="SULFITE REDUCTASE [NADPH] SUBUNIT BETA"/>
    <property type="match status" value="1"/>
</dbReference>
<dbReference type="PANTHER" id="PTHR11493">
    <property type="entry name" value="SULFITE REDUCTASE [NADPH] SUBUNIT BETA-RELATED"/>
    <property type="match status" value="1"/>
</dbReference>
<dbReference type="Pfam" id="PF01077">
    <property type="entry name" value="NIR_SIR"/>
    <property type="match status" value="1"/>
</dbReference>
<dbReference type="Pfam" id="PF03460">
    <property type="entry name" value="NIR_SIR_ferr"/>
    <property type="match status" value="2"/>
</dbReference>
<dbReference type="PRINTS" id="PR00397">
    <property type="entry name" value="SIROHAEM"/>
</dbReference>
<dbReference type="SUPFAM" id="SSF56014">
    <property type="entry name" value="Nitrite and sulphite reductase 4Fe-4S domain-like"/>
    <property type="match status" value="2"/>
</dbReference>
<dbReference type="SUPFAM" id="SSF55124">
    <property type="entry name" value="Nitrite/Sulfite reductase N-terminal domain-like"/>
    <property type="match status" value="2"/>
</dbReference>
<dbReference type="PROSITE" id="PS00365">
    <property type="entry name" value="NIR_SIR"/>
    <property type="match status" value="1"/>
</dbReference>